<organism>
    <name type="scientific">Eucomis montana</name>
    <name type="common">Pineapple lily</name>
    <dbReference type="NCBI Taxonomy" id="208120"/>
    <lineage>
        <taxon>Eukaryota</taxon>
        <taxon>Viridiplantae</taxon>
        <taxon>Streptophyta</taxon>
        <taxon>Embryophyta</taxon>
        <taxon>Tracheophyta</taxon>
        <taxon>Spermatophyta</taxon>
        <taxon>Magnoliopsida</taxon>
        <taxon>Liliopsida</taxon>
        <taxon>Asparagales</taxon>
        <taxon>Hyacinthaceae</taxon>
        <taxon>Hyacinthoideae</taxon>
        <taxon>Massonieae</taxon>
        <taxon>Eucomis</taxon>
    </lineage>
</organism>
<reference key="1">
    <citation type="journal article" date="2003" name="J. Plant Res.">
        <title>Phylogenetic relationships among genera of Massonieae (Hyacinthaceae) inferred from plastid DNA and seed morphology.</title>
        <authorList>
            <person name="Pfosser M.F."/>
            <person name="Wetschnig W."/>
            <person name="Ungar S."/>
            <person name="Prenner G."/>
        </authorList>
    </citation>
    <scope>NUCLEOTIDE SEQUENCE [GENOMIC DNA]</scope>
</reference>
<geneLocation type="chloroplast"/>
<feature type="chain" id="PRO_0000254475" description="ATP synthase subunit beta, chloroplastic">
    <location>
        <begin position="1"/>
        <end position="495"/>
    </location>
</feature>
<feature type="binding site" evidence="1">
    <location>
        <begin position="172"/>
        <end position="179"/>
    </location>
    <ligand>
        <name>ATP</name>
        <dbReference type="ChEBI" id="CHEBI:30616"/>
    </ligand>
</feature>
<comment type="function">
    <text evidence="1">Produces ATP from ADP in the presence of a proton gradient across the membrane. The catalytic sites are hosted primarily by the beta subunits.</text>
</comment>
<comment type="catalytic activity">
    <reaction evidence="1">
        <text>ATP + H2O + 4 H(+)(in) = ADP + phosphate + 5 H(+)(out)</text>
        <dbReference type="Rhea" id="RHEA:57720"/>
        <dbReference type="ChEBI" id="CHEBI:15377"/>
        <dbReference type="ChEBI" id="CHEBI:15378"/>
        <dbReference type="ChEBI" id="CHEBI:30616"/>
        <dbReference type="ChEBI" id="CHEBI:43474"/>
        <dbReference type="ChEBI" id="CHEBI:456216"/>
        <dbReference type="EC" id="7.1.2.2"/>
    </reaction>
</comment>
<comment type="subunit">
    <text evidence="1">F-type ATPases have 2 components, CF(1) - the catalytic core - and CF(0) - the membrane proton channel. CF(1) has five subunits: alpha(3), beta(3), gamma(1), delta(1), epsilon(1). CF(0) has four main subunits: a(1), b(1), b'(1) and c(9-12).</text>
</comment>
<comment type="subcellular location">
    <subcellularLocation>
        <location evidence="1">Plastid</location>
        <location evidence="1">Chloroplast thylakoid membrane</location>
        <topology evidence="1">Peripheral membrane protein</topology>
    </subcellularLocation>
</comment>
<comment type="similarity">
    <text evidence="1">Belongs to the ATPase alpha/beta chains family.</text>
</comment>
<dbReference type="EC" id="7.1.2.2" evidence="1"/>
<dbReference type="EMBL" id="AJ508197">
    <property type="protein sequence ID" value="CAD48099.1"/>
    <property type="molecule type" value="Genomic_DNA"/>
</dbReference>
<dbReference type="SMR" id="Q85V45"/>
<dbReference type="GO" id="GO:0009535">
    <property type="term" value="C:chloroplast thylakoid membrane"/>
    <property type="evidence" value="ECO:0007669"/>
    <property type="project" value="UniProtKB-SubCell"/>
</dbReference>
<dbReference type="GO" id="GO:0005739">
    <property type="term" value="C:mitochondrion"/>
    <property type="evidence" value="ECO:0007669"/>
    <property type="project" value="GOC"/>
</dbReference>
<dbReference type="GO" id="GO:0045259">
    <property type="term" value="C:proton-transporting ATP synthase complex"/>
    <property type="evidence" value="ECO:0007669"/>
    <property type="project" value="UniProtKB-KW"/>
</dbReference>
<dbReference type="GO" id="GO:0005524">
    <property type="term" value="F:ATP binding"/>
    <property type="evidence" value="ECO:0007669"/>
    <property type="project" value="UniProtKB-UniRule"/>
</dbReference>
<dbReference type="GO" id="GO:0016887">
    <property type="term" value="F:ATP hydrolysis activity"/>
    <property type="evidence" value="ECO:0007669"/>
    <property type="project" value="InterPro"/>
</dbReference>
<dbReference type="GO" id="GO:0046933">
    <property type="term" value="F:proton-transporting ATP synthase activity, rotational mechanism"/>
    <property type="evidence" value="ECO:0007669"/>
    <property type="project" value="UniProtKB-UniRule"/>
</dbReference>
<dbReference type="GO" id="GO:0042776">
    <property type="term" value="P:proton motive force-driven mitochondrial ATP synthesis"/>
    <property type="evidence" value="ECO:0007669"/>
    <property type="project" value="TreeGrafter"/>
</dbReference>
<dbReference type="CDD" id="cd18110">
    <property type="entry name" value="ATP-synt_F1_beta_C"/>
    <property type="match status" value="1"/>
</dbReference>
<dbReference type="CDD" id="cd18115">
    <property type="entry name" value="ATP-synt_F1_beta_N"/>
    <property type="match status" value="1"/>
</dbReference>
<dbReference type="CDD" id="cd01133">
    <property type="entry name" value="F1-ATPase_beta_CD"/>
    <property type="match status" value="1"/>
</dbReference>
<dbReference type="FunFam" id="1.10.1140.10:FF:000001">
    <property type="entry name" value="ATP synthase subunit beta"/>
    <property type="match status" value="1"/>
</dbReference>
<dbReference type="FunFam" id="3.40.50.300:FF:000004">
    <property type="entry name" value="ATP synthase subunit beta"/>
    <property type="match status" value="1"/>
</dbReference>
<dbReference type="FunFam" id="2.40.10.170:FF:000002">
    <property type="entry name" value="ATP synthase subunit beta, chloroplastic"/>
    <property type="match status" value="1"/>
</dbReference>
<dbReference type="Gene3D" id="2.40.10.170">
    <property type="match status" value="1"/>
</dbReference>
<dbReference type="Gene3D" id="1.10.1140.10">
    <property type="entry name" value="Bovine Mitochondrial F1-atpase, Atp Synthase Beta Chain, Chain D, domain 3"/>
    <property type="match status" value="1"/>
</dbReference>
<dbReference type="Gene3D" id="3.40.50.300">
    <property type="entry name" value="P-loop containing nucleotide triphosphate hydrolases"/>
    <property type="match status" value="1"/>
</dbReference>
<dbReference type="HAMAP" id="MF_01347">
    <property type="entry name" value="ATP_synth_beta_bact"/>
    <property type="match status" value="1"/>
</dbReference>
<dbReference type="InterPro" id="IPR003593">
    <property type="entry name" value="AAA+_ATPase"/>
</dbReference>
<dbReference type="InterPro" id="IPR055190">
    <property type="entry name" value="ATP-synt_VA_C"/>
</dbReference>
<dbReference type="InterPro" id="IPR005722">
    <property type="entry name" value="ATP_synth_F1_bsu"/>
</dbReference>
<dbReference type="InterPro" id="IPR020003">
    <property type="entry name" value="ATPase_a/bsu_AS"/>
</dbReference>
<dbReference type="InterPro" id="IPR050053">
    <property type="entry name" value="ATPase_alpha/beta_chains"/>
</dbReference>
<dbReference type="InterPro" id="IPR004100">
    <property type="entry name" value="ATPase_F1/V1/A1_a/bsu_N"/>
</dbReference>
<dbReference type="InterPro" id="IPR036121">
    <property type="entry name" value="ATPase_F1/V1/A1_a/bsu_N_sf"/>
</dbReference>
<dbReference type="InterPro" id="IPR000194">
    <property type="entry name" value="ATPase_F1/V1/A1_a/bsu_nucl-bd"/>
</dbReference>
<dbReference type="InterPro" id="IPR024034">
    <property type="entry name" value="ATPase_F1/V1_b/a_C"/>
</dbReference>
<dbReference type="InterPro" id="IPR027417">
    <property type="entry name" value="P-loop_NTPase"/>
</dbReference>
<dbReference type="NCBIfam" id="TIGR01039">
    <property type="entry name" value="atpD"/>
    <property type="match status" value="1"/>
</dbReference>
<dbReference type="PANTHER" id="PTHR15184">
    <property type="entry name" value="ATP SYNTHASE"/>
    <property type="match status" value="1"/>
</dbReference>
<dbReference type="PANTHER" id="PTHR15184:SF71">
    <property type="entry name" value="ATP SYNTHASE SUBUNIT BETA, MITOCHONDRIAL"/>
    <property type="match status" value="1"/>
</dbReference>
<dbReference type="Pfam" id="PF00006">
    <property type="entry name" value="ATP-synt_ab"/>
    <property type="match status" value="1"/>
</dbReference>
<dbReference type="Pfam" id="PF02874">
    <property type="entry name" value="ATP-synt_ab_N"/>
    <property type="match status" value="1"/>
</dbReference>
<dbReference type="Pfam" id="PF22919">
    <property type="entry name" value="ATP-synt_VA_C"/>
    <property type="match status" value="1"/>
</dbReference>
<dbReference type="SMART" id="SM00382">
    <property type="entry name" value="AAA"/>
    <property type="match status" value="1"/>
</dbReference>
<dbReference type="SUPFAM" id="SSF47917">
    <property type="entry name" value="C-terminal domain of alpha and beta subunits of F1 ATP synthase"/>
    <property type="match status" value="1"/>
</dbReference>
<dbReference type="SUPFAM" id="SSF50615">
    <property type="entry name" value="N-terminal domain of alpha and beta subunits of F1 ATP synthase"/>
    <property type="match status" value="1"/>
</dbReference>
<dbReference type="SUPFAM" id="SSF52540">
    <property type="entry name" value="P-loop containing nucleoside triphosphate hydrolases"/>
    <property type="match status" value="1"/>
</dbReference>
<dbReference type="PROSITE" id="PS00152">
    <property type="entry name" value="ATPASE_ALPHA_BETA"/>
    <property type="match status" value="1"/>
</dbReference>
<name>ATPB_EUCMO</name>
<protein>
    <recommendedName>
        <fullName evidence="1">ATP synthase subunit beta, chloroplastic</fullName>
        <ecNumber evidence="1">7.1.2.2</ecNumber>
    </recommendedName>
    <alternativeName>
        <fullName evidence="1">ATP synthase F1 sector subunit beta</fullName>
    </alternativeName>
    <alternativeName>
        <fullName evidence="1">F-ATPase subunit beta</fullName>
    </alternativeName>
</protein>
<sequence>MRINPTTSDPAVSTLEEKNLGRIAQIIGPVLDVVFPPGKMPNIYNALVVKGRDTVGQQINVTCEVQQLLGNNRVRAVAMSATDGLTRGMEVIDTGAALSVPVGGATLGRIFNVLGEPVDNLGPVDTRTTSPIHRSAPAFIQLDTKLSIFETGIKVVDLLAPYRRGGKIGLFGGAGVGKTVLIMELINNIAKAHGGVSVFGGVGERTREGNDLYMEMKESGVINEKNIAESKVALVYGQMNEPPGARMRVGLTALTMAEYIRDVNEQDVLLFIDNIFRFVQAGSEVSALLGRMPSAVGYQPTLSTEMGSLQERITSTKEGSITSIQAVYVPADDLTDPAPATTFAHLDATTVLSRGLAAKGIYPAVDPLDSTSTMLQPRIVGEEHYETAQRVKQTLQRYKELQDIIAILGLDELSEEDRLTVARARKIERFLSQPFFVAEVFTGSPGKYVGLTETIRGFQLILSGELDGLPEQAFYLVGNIDEATAKAMNLEGEKK</sequence>
<accession>Q85V45</accession>
<evidence type="ECO:0000255" key="1">
    <source>
        <dbReference type="HAMAP-Rule" id="MF_01347"/>
    </source>
</evidence>
<proteinExistence type="inferred from homology"/>
<keyword id="KW-0066">ATP synthesis</keyword>
<keyword id="KW-0067">ATP-binding</keyword>
<keyword id="KW-0139">CF(1)</keyword>
<keyword id="KW-0150">Chloroplast</keyword>
<keyword id="KW-0375">Hydrogen ion transport</keyword>
<keyword id="KW-0406">Ion transport</keyword>
<keyword id="KW-0472">Membrane</keyword>
<keyword id="KW-0547">Nucleotide-binding</keyword>
<keyword id="KW-0934">Plastid</keyword>
<keyword id="KW-0793">Thylakoid</keyword>
<keyword id="KW-1278">Translocase</keyword>
<keyword id="KW-0813">Transport</keyword>
<gene>
    <name evidence="1" type="primary">atpB</name>
</gene>